<accession>Q09451</accession>
<reference key="1">
    <citation type="journal article" date="1998" name="Science">
        <title>Genome sequence of the nematode C. elegans: a platform for investigating biology.</title>
        <authorList>
            <consortium name="The C. elegans sequencing consortium"/>
        </authorList>
    </citation>
    <scope>NUCLEOTIDE SEQUENCE [LARGE SCALE GENOMIC DNA]</scope>
    <source>
        <strain>Bristol N2</strain>
    </source>
</reference>
<feature type="chain" id="PRO_0000114469" description="Putative acid phosphatase 11">
    <location>
        <begin position="1"/>
        <end position="413"/>
    </location>
</feature>
<feature type="active site" description="Nucleophile" evidence="1">
    <location>
        <position position="35"/>
    </location>
</feature>
<feature type="active site" description="Proton donor" evidence="1">
    <location>
        <position position="315"/>
    </location>
</feature>
<feature type="disulfide bond" evidence="1">
    <location>
        <begin position="381"/>
        <end position="387"/>
    </location>
</feature>
<sequence length="413" mass="46617">MMISIFSLLASTAILVFANGQSNVKLEFVQAMWRHGERASQVDQYPIYEKDWIYGGGGLGELTAIGMGEMNELGWLIRKRYVTKLKFLTPKYASREVYFRSTNFNRTIISAQSLLYGLFPPSLYDVKNVDYPYSPLTWFPGFTFVPVHVDGPDQCAASQNCPCTRYDLLQGQMLTLPEVLPKYTQVVLLNRRVGGYYNMTSGLDSFTTYPDTWKCQRAYFNRTMYAKLPWYNEELYYQAQVTYAPVKGFLEGNFENPAVTSSGLDVGLEIKKVRSGVIINEVFNRANEKLNCAELGQNCTSYLNKLKFYGYSIHDNNVYGVLVALGIPQIANTLDGWPAYAAGIFMEFHRNTSTNERFFKVLYREGDDTPISDVTSQLPICNGATLCPLGALQTLAETLKPLPDITTLCKTPL</sequence>
<protein>
    <recommendedName>
        <fullName>Putative acid phosphatase 11</fullName>
        <ecNumber>3.1.3.2</ecNumber>
    </recommendedName>
</protein>
<keyword id="KW-1015">Disulfide bond</keyword>
<keyword id="KW-0378">Hydrolase</keyword>
<keyword id="KW-1185">Reference proteome</keyword>
<name>PHO11_CAEEL</name>
<dbReference type="EC" id="3.1.3.2"/>
<dbReference type="EMBL" id="Z48178">
    <property type="protein sequence ID" value="CAA88205.1"/>
    <property type="molecule type" value="Genomic_DNA"/>
</dbReference>
<dbReference type="PIR" id="T18945">
    <property type="entry name" value="T18945"/>
</dbReference>
<dbReference type="RefSeq" id="NP_496143.1">
    <property type="nucleotide sequence ID" value="NM_063742.9"/>
</dbReference>
<dbReference type="SMR" id="Q09451"/>
<dbReference type="BioGRID" id="39869">
    <property type="interactions" value="9"/>
</dbReference>
<dbReference type="FunCoup" id="Q09451">
    <property type="interactions" value="108"/>
</dbReference>
<dbReference type="IntAct" id="Q09451">
    <property type="interactions" value="1"/>
</dbReference>
<dbReference type="MINT" id="Q09451"/>
<dbReference type="STRING" id="6239.C05C10.4.3"/>
<dbReference type="PaxDb" id="6239-C05C10.4.1"/>
<dbReference type="PeptideAtlas" id="Q09451"/>
<dbReference type="EnsemblMetazoa" id="C05C10.4.1">
    <property type="protein sequence ID" value="C05C10.4.1"/>
    <property type="gene ID" value="WBGene00007331"/>
</dbReference>
<dbReference type="EnsemblMetazoa" id="C05C10.4.2">
    <property type="protein sequence ID" value="C05C10.4.2"/>
    <property type="gene ID" value="WBGene00007331"/>
</dbReference>
<dbReference type="GeneID" id="174547"/>
<dbReference type="KEGG" id="cel:CELE_C05C10.4"/>
<dbReference type="UCSC" id="C05C10.4.1">
    <property type="organism name" value="c. elegans"/>
</dbReference>
<dbReference type="AGR" id="WB:WBGene00007331"/>
<dbReference type="CTD" id="174547"/>
<dbReference type="WormBase" id="C05C10.4">
    <property type="protein sequence ID" value="CE17370"/>
    <property type="gene ID" value="WBGene00007331"/>
    <property type="gene designation" value="pho-11"/>
</dbReference>
<dbReference type="eggNOG" id="KOG3720">
    <property type="taxonomic scope" value="Eukaryota"/>
</dbReference>
<dbReference type="GeneTree" id="ENSGT00940000168803"/>
<dbReference type="HOGENOM" id="CLU_030431_2_0_1"/>
<dbReference type="InParanoid" id="Q09451"/>
<dbReference type="OMA" id="WQPGLTF"/>
<dbReference type="OrthoDB" id="258392at2759"/>
<dbReference type="PhylomeDB" id="Q09451"/>
<dbReference type="Reactome" id="R-CEL-6798695">
    <property type="pathway name" value="Neutrophil degranulation"/>
</dbReference>
<dbReference type="PRO" id="PR:Q09451"/>
<dbReference type="Proteomes" id="UP000001940">
    <property type="component" value="Chromosome II"/>
</dbReference>
<dbReference type="Bgee" id="WBGene00007331">
    <property type="expression patterns" value="Expressed in larva and 3 other cell types or tissues"/>
</dbReference>
<dbReference type="GO" id="GO:0003993">
    <property type="term" value="F:acid phosphatase activity"/>
    <property type="evidence" value="ECO:0007669"/>
    <property type="project" value="UniProtKB-EC"/>
</dbReference>
<dbReference type="GO" id="GO:0016791">
    <property type="term" value="F:phosphatase activity"/>
    <property type="evidence" value="ECO:0000318"/>
    <property type="project" value="GO_Central"/>
</dbReference>
<dbReference type="CDD" id="cd07061">
    <property type="entry name" value="HP_HAP_like"/>
    <property type="match status" value="1"/>
</dbReference>
<dbReference type="Gene3D" id="3.40.50.1240">
    <property type="entry name" value="Phosphoglycerate mutase-like"/>
    <property type="match status" value="1"/>
</dbReference>
<dbReference type="InterPro" id="IPR033379">
    <property type="entry name" value="Acid_Pase_AS"/>
</dbReference>
<dbReference type="InterPro" id="IPR000560">
    <property type="entry name" value="His_Pase_clade-2"/>
</dbReference>
<dbReference type="InterPro" id="IPR029033">
    <property type="entry name" value="His_PPase_superfam"/>
</dbReference>
<dbReference type="InterPro" id="IPR050645">
    <property type="entry name" value="Histidine_acid_phosphatase"/>
</dbReference>
<dbReference type="PANTHER" id="PTHR11567:SF181">
    <property type="entry name" value="ACID PHOSPHATASE 10-RELATED"/>
    <property type="match status" value="1"/>
</dbReference>
<dbReference type="PANTHER" id="PTHR11567">
    <property type="entry name" value="ACID PHOSPHATASE-RELATED"/>
    <property type="match status" value="1"/>
</dbReference>
<dbReference type="Pfam" id="PF00328">
    <property type="entry name" value="His_Phos_2"/>
    <property type="match status" value="1"/>
</dbReference>
<dbReference type="SUPFAM" id="SSF53254">
    <property type="entry name" value="Phosphoglycerate mutase-like"/>
    <property type="match status" value="1"/>
</dbReference>
<dbReference type="PROSITE" id="PS00616">
    <property type="entry name" value="HIS_ACID_PHOSPHAT_1"/>
    <property type="match status" value="1"/>
</dbReference>
<dbReference type="PROSITE" id="PS00778">
    <property type="entry name" value="HIS_ACID_PHOSPHAT_2"/>
    <property type="match status" value="1"/>
</dbReference>
<proteinExistence type="inferred from homology"/>
<organism>
    <name type="scientific">Caenorhabditis elegans</name>
    <dbReference type="NCBI Taxonomy" id="6239"/>
    <lineage>
        <taxon>Eukaryota</taxon>
        <taxon>Metazoa</taxon>
        <taxon>Ecdysozoa</taxon>
        <taxon>Nematoda</taxon>
        <taxon>Chromadorea</taxon>
        <taxon>Rhabditida</taxon>
        <taxon>Rhabditina</taxon>
        <taxon>Rhabditomorpha</taxon>
        <taxon>Rhabditoidea</taxon>
        <taxon>Rhabditidae</taxon>
        <taxon>Peloderinae</taxon>
        <taxon>Caenorhabditis</taxon>
    </lineage>
</organism>
<evidence type="ECO:0000250" key="1"/>
<evidence type="ECO:0000305" key="2"/>
<comment type="catalytic activity">
    <reaction>
        <text>a phosphate monoester + H2O = an alcohol + phosphate</text>
        <dbReference type="Rhea" id="RHEA:15017"/>
        <dbReference type="ChEBI" id="CHEBI:15377"/>
        <dbReference type="ChEBI" id="CHEBI:30879"/>
        <dbReference type="ChEBI" id="CHEBI:43474"/>
        <dbReference type="ChEBI" id="CHEBI:67140"/>
        <dbReference type="EC" id="3.1.3.2"/>
    </reaction>
</comment>
<comment type="similarity">
    <text evidence="2">Belongs to the histidine acid phosphatase family.</text>
</comment>
<gene>
    <name type="primary">pho-11</name>
    <name type="ORF">C05C10.4</name>
</gene>